<protein>
    <recommendedName>
        <fullName>Arginyl-tRNA--protein transferase 1</fullName>
        <shortName>Arginyltransferase 1</shortName>
        <shortName>R-transferase 1</shortName>
        <ecNumber evidence="3">2.3.2.8</ecNumber>
    </recommendedName>
    <alternativeName>
        <fullName>Arginine-tRNA--protein transferase 1</fullName>
    </alternativeName>
</protein>
<dbReference type="EC" id="2.3.2.8" evidence="3"/>
<dbReference type="EMBL" id="AF079096">
    <property type="protein sequence ID" value="AAD12364.1"/>
    <property type="molecule type" value="mRNA"/>
</dbReference>
<dbReference type="EMBL" id="AF079097">
    <property type="protein sequence ID" value="AAD12365.1"/>
    <property type="molecule type" value="mRNA"/>
</dbReference>
<dbReference type="EMBL" id="DQ093640">
    <property type="protein sequence ID" value="AAZ03497.1"/>
    <property type="molecule type" value="mRNA"/>
</dbReference>
<dbReference type="EMBL" id="DQ093639">
    <property type="protein sequence ID" value="AAZ03496.1"/>
    <property type="molecule type" value="mRNA"/>
</dbReference>
<dbReference type="EMBL" id="AK148442">
    <property type="protein sequence ID" value="BAE28555.1"/>
    <property type="molecule type" value="mRNA"/>
</dbReference>
<dbReference type="EMBL" id="AK167591">
    <property type="protein sequence ID" value="BAE39649.1"/>
    <property type="molecule type" value="mRNA"/>
</dbReference>
<dbReference type="EMBL" id="BC042601">
    <property type="protein sequence ID" value="AAH42601.1"/>
    <property type="molecule type" value="mRNA"/>
</dbReference>
<dbReference type="CCDS" id="CCDS21901.1">
    <molecule id="Q9Z2A5-3"/>
</dbReference>
<dbReference type="CCDS" id="CCDS21902.1">
    <molecule id="Q9Z2A5-1"/>
</dbReference>
<dbReference type="CCDS" id="CCDS52414.1">
    <molecule id="Q9Z2A5-2"/>
</dbReference>
<dbReference type="CCDS" id="CCDS72051.1">
    <molecule id="Q9Z2A5-4"/>
</dbReference>
<dbReference type="RefSeq" id="NP_001025066.1">
    <molecule id="Q9Z2A5-3"/>
    <property type="nucleotide sequence ID" value="NM_001029895.4"/>
</dbReference>
<dbReference type="RefSeq" id="NP_001129526.1">
    <molecule id="Q9Z2A5-2"/>
    <property type="nucleotide sequence ID" value="NM_001136054.3"/>
</dbReference>
<dbReference type="RefSeq" id="NP_001258272.1">
    <molecule id="Q9Z2A5-4"/>
    <property type="nucleotide sequence ID" value="NM_001271343.2"/>
</dbReference>
<dbReference type="RefSeq" id="NP_038827.2">
    <molecule id="Q9Z2A5-1"/>
    <property type="nucleotide sequence ID" value="NM_013799.3"/>
</dbReference>
<dbReference type="SMR" id="Q9Z2A5"/>
<dbReference type="BioGRID" id="198231">
    <property type="interactions" value="4"/>
</dbReference>
<dbReference type="FunCoup" id="Q9Z2A5">
    <property type="interactions" value="5009"/>
</dbReference>
<dbReference type="STRING" id="10090.ENSMUSP00000033139"/>
<dbReference type="GlyGen" id="Q9Z2A5">
    <property type="glycosylation" value="1 site, 1 O-linked glycan (1 site)"/>
</dbReference>
<dbReference type="iPTMnet" id="Q9Z2A5"/>
<dbReference type="PhosphoSitePlus" id="Q9Z2A5"/>
<dbReference type="PaxDb" id="10090-ENSMUSP00000033139"/>
<dbReference type="ProteomicsDB" id="277210">
    <molecule id="Q9Z2A5-1"/>
</dbReference>
<dbReference type="ProteomicsDB" id="277211">
    <molecule id="Q9Z2A5-2"/>
</dbReference>
<dbReference type="ProteomicsDB" id="338768"/>
<dbReference type="Pumba" id="Q9Z2A5"/>
<dbReference type="Antibodypedia" id="32214">
    <property type="antibodies" value="191 antibodies from 32 providers"/>
</dbReference>
<dbReference type="DNASU" id="11907"/>
<dbReference type="Ensembl" id="ENSMUST00000033139.15">
    <molecule id="Q9Z2A5-1"/>
    <property type="protein sequence ID" value="ENSMUSP00000033139.8"/>
    <property type="gene ID" value="ENSMUSG00000030850.18"/>
</dbReference>
<dbReference type="Ensembl" id="ENSMUST00000035458.15">
    <molecule id="Q9Z2A5-2"/>
    <property type="protein sequence ID" value="ENSMUSP00000043365.8"/>
    <property type="gene ID" value="ENSMUSG00000030850.18"/>
</dbReference>
<dbReference type="Ensembl" id="ENSMUST00000094017.5">
    <molecule id="Q9Z2A5-3"/>
    <property type="protein sequence ID" value="ENSMUSP00000091556.4"/>
    <property type="gene ID" value="ENSMUSG00000030850.18"/>
</dbReference>
<dbReference type="Ensembl" id="ENSMUST00000178534.8">
    <molecule id="Q9Z2A5-4"/>
    <property type="protein sequence ID" value="ENSMUSP00000136956.2"/>
    <property type="gene ID" value="ENSMUSG00000030850.18"/>
</dbReference>
<dbReference type="GeneID" id="11907"/>
<dbReference type="KEGG" id="mmu:11907"/>
<dbReference type="UCSC" id="uc009kaa.2">
    <molecule id="Q9Z2A5-1"/>
    <property type="organism name" value="mouse"/>
</dbReference>
<dbReference type="AGR" id="MGI:1333870"/>
<dbReference type="CTD" id="11101"/>
<dbReference type="MGI" id="MGI:1333870">
    <property type="gene designation" value="Ate1"/>
</dbReference>
<dbReference type="VEuPathDB" id="HostDB:ENSMUSG00000030850"/>
<dbReference type="eggNOG" id="KOG1193">
    <property type="taxonomic scope" value="Eukaryota"/>
</dbReference>
<dbReference type="GeneTree" id="ENSGT00500000044926"/>
<dbReference type="InParanoid" id="Q9Z2A5"/>
<dbReference type="OMA" id="SDRMVYS"/>
<dbReference type="PhylomeDB" id="Q9Z2A5"/>
<dbReference type="TreeFam" id="TF105976"/>
<dbReference type="BRENDA" id="2.3.2.8">
    <property type="organism ID" value="3474"/>
</dbReference>
<dbReference type="BioGRID-ORCS" id="11907">
    <property type="hits" value="2 hits in 76 CRISPR screens"/>
</dbReference>
<dbReference type="ChiTaRS" id="Ate1">
    <property type="organism name" value="mouse"/>
</dbReference>
<dbReference type="PRO" id="PR:Q9Z2A5"/>
<dbReference type="Proteomes" id="UP000000589">
    <property type="component" value="Chromosome 7"/>
</dbReference>
<dbReference type="RNAct" id="Q9Z2A5">
    <property type="molecule type" value="protein"/>
</dbReference>
<dbReference type="Bgee" id="ENSMUSG00000030850">
    <property type="expression patterns" value="Expressed in supraoptic nucleus and 241 other cell types or tissues"/>
</dbReference>
<dbReference type="ExpressionAtlas" id="Q9Z2A5">
    <property type="expression patterns" value="baseline and differential"/>
</dbReference>
<dbReference type="GO" id="GO:0005737">
    <property type="term" value="C:cytoplasm"/>
    <property type="evidence" value="ECO:0000314"/>
    <property type="project" value="MGI"/>
</dbReference>
<dbReference type="GO" id="GO:0005634">
    <property type="term" value="C:nucleus"/>
    <property type="evidence" value="ECO:0000314"/>
    <property type="project" value="MGI"/>
</dbReference>
<dbReference type="GO" id="GO:0004057">
    <property type="term" value="F:arginyl-tRNA--protein transferase activity"/>
    <property type="evidence" value="ECO:0000314"/>
    <property type="project" value="UniProtKB"/>
</dbReference>
<dbReference type="GO" id="GO:0010498">
    <property type="term" value="P:proteasomal protein catabolic process"/>
    <property type="evidence" value="ECO:0000266"/>
    <property type="project" value="MGI"/>
</dbReference>
<dbReference type="GO" id="GO:0006511">
    <property type="term" value="P:ubiquitin-dependent protein catabolic process"/>
    <property type="evidence" value="ECO:0000314"/>
    <property type="project" value="UniProtKB"/>
</dbReference>
<dbReference type="InterPro" id="IPR016181">
    <property type="entry name" value="Acyl_CoA_acyltransferase"/>
</dbReference>
<dbReference type="InterPro" id="IPR017137">
    <property type="entry name" value="Arg-tRNA-P_Trfase_1_euk"/>
</dbReference>
<dbReference type="InterPro" id="IPR030700">
    <property type="entry name" value="N-end_Aminoacyl_Trfase"/>
</dbReference>
<dbReference type="InterPro" id="IPR007472">
    <property type="entry name" value="N-end_Aminoacyl_Trfase_C"/>
</dbReference>
<dbReference type="InterPro" id="IPR007471">
    <property type="entry name" value="N-end_Aminoacyl_Trfase_N"/>
</dbReference>
<dbReference type="PANTHER" id="PTHR21367">
    <property type="entry name" value="ARGININE-TRNA-PROTEIN TRANSFERASE 1"/>
    <property type="match status" value="1"/>
</dbReference>
<dbReference type="PANTHER" id="PTHR21367:SF1">
    <property type="entry name" value="ARGINYL-TRNA--PROTEIN TRANSFERASE 1"/>
    <property type="match status" value="1"/>
</dbReference>
<dbReference type="Pfam" id="PF04377">
    <property type="entry name" value="ATE_C"/>
    <property type="match status" value="1"/>
</dbReference>
<dbReference type="Pfam" id="PF04376">
    <property type="entry name" value="ATE_N"/>
    <property type="match status" value="1"/>
</dbReference>
<dbReference type="PIRSF" id="PIRSF037207">
    <property type="entry name" value="ATE1_euk"/>
    <property type="match status" value="1"/>
</dbReference>
<dbReference type="SUPFAM" id="SSF55729">
    <property type="entry name" value="Acyl-CoA N-acyltransferases (Nat)"/>
    <property type="match status" value="1"/>
</dbReference>
<gene>
    <name evidence="9 11" type="primary">Ate1</name>
</gene>
<comment type="function">
    <text evidence="2 3 5 6">Involved in the post-translational conjugation of arginine to the N-terminal aspartate or glutamate of a protein (PubMed:16002466, PubMed:25369936, PubMed:34893540, PubMed:9858543). This arginylation is required for degradation of the protein via the ubiquitin pathway (PubMed:16002466, PubMed:34893540, PubMed:9858543). Does not arginylate cysteine residues (PubMed:9858543).</text>
</comment>
<comment type="catalytic activity">
    <reaction evidence="2 3">
        <text>an N-terminal L-alpha-aminoacyl-[protein] + L-arginyl-tRNA(Arg) = an N-terminal L-arginyl-L-aminoacyl-[protein] + tRNA(Arg) + H(+)</text>
        <dbReference type="Rhea" id="RHEA:10208"/>
        <dbReference type="Rhea" id="RHEA-COMP:9658"/>
        <dbReference type="Rhea" id="RHEA-COMP:9673"/>
        <dbReference type="Rhea" id="RHEA-COMP:10636"/>
        <dbReference type="Rhea" id="RHEA-COMP:10638"/>
        <dbReference type="ChEBI" id="CHEBI:15378"/>
        <dbReference type="ChEBI" id="CHEBI:78442"/>
        <dbReference type="ChEBI" id="CHEBI:78513"/>
        <dbReference type="ChEBI" id="CHEBI:78597"/>
        <dbReference type="ChEBI" id="CHEBI:83562"/>
        <dbReference type="EC" id="2.3.2.8"/>
    </reaction>
    <physiologicalReaction direction="left-to-right" evidence="2 3">
        <dbReference type="Rhea" id="RHEA:10209"/>
    </physiologicalReaction>
</comment>
<comment type="subunit">
    <text evidence="3 4 10">Monomer (Probable). Interacts with LIAT1; LIAT1 is not a substrate of ATE1, the interaction takes place in the cytoplasm and seems to increase ATE1 arginyltransferase activity (PubMed:25369936, PubMed:33443146).</text>
</comment>
<comment type="subunit">
    <molecule>Isoform ATE1-3</molecule>
    <text evidence="3">Interacts with LIAT1; has a higher affinity than the other isoforms.</text>
</comment>
<comment type="subcellular location">
    <subcellularLocation>
        <location evidence="2">Nucleus</location>
    </subcellularLocation>
    <subcellularLocation>
        <location evidence="2">Cytoplasm</location>
    </subcellularLocation>
</comment>
<comment type="subcellular location">
    <molecule>Isoform ATE1-1</molecule>
    <subcellularLocation>
        <location evidence="6">Nucleus</location>
    </subcellularLocation>
    <subcellularLocation>
        <location evidence="4 6">Cytoplasm</location>
    </subcellularLocation>
</comment>
<comment type="subcellular location">
    <molecule>Isoform ATE1-2</molecule>
    <subcellularLocation>
        <location evidence="6">Cytoplasm</location>
    </subcellularLocation>
</comment>
<comment type="alternative products">
    <event type="alternative promoter"/>
    <event type="alternative splicing"/>
    <isoform>
        <id>Q9Z2A5-1</id>
        <name>ATE1-1</name>
        <name evidence="8">ATE1-1B7A</name>
        <sequence type="displayed"/>
    </isoform>
    <isoform>
        <id>Q9Z2A5-2</id>
        <name>ATE1-2</name>
        <name evidence="8">ATE1-1B7B</name>
        <sequence type="described" ref="VSP_000337"/>
    </isoform>
    <isoform>
        <id>Q9Z2A5-3</id>
        <name>ATE1-3</name>
        <name evidence="8">ATE1-1A7A</name>
        <sequence type="described" ref="VSP_061924"/>
    </isoform>
    <isoform>
        <id>Q9Z2A5-4</id>
        <name>ATE1-4</name>
        <name evidence="8">ATE1-1A7B</name>
        <sequence type="described" ref="VSP_061924 VSP_000337"/>
    </isoform>
</comment>
<comment type="tissue specificity">
    <text evidence="6">Widely expressed.</text>
</comment>
<comment type="miscellaneous">
    <molecule>Isoform ATE1-1</molecule>
    <text>Shows significantly higher activity than isoform ATE1-2.</text>
</comment>
<comment type="similarity">
    <text evidence="10">Belongs to the R-transferase family.</text>
</comment>
<evidence type="ECO:0000256" key="1">
    <source>
        <dbReference type="SAM" id="MobiDB-lite"/>
    </source>
</evidence>
<evidence type="ECO:0000269" key="2">
    <source>
    </source>
</evidence>
<evidence type="ECO:0000269" key="3">
    <source>
    </source>
</evidence>
<evidence type="ECO:0000269" key="4">
    <source>
    </source>
</evidence>
<evidence type="ECO:0000269" key="5">
    <source>
    </source>
</evidence>
<evidence type="ECO:0000269" key="6">
    <source>
    </source>
</evidence>
<evidence type="ECO:0000303" key="7">
    <source>
    </source>
</evidence>
<evidence type="ECO:0000303" key="8">
    <source>
    </source>
</evidence>
<evidence type="ECO:0000303" key="9">
    <source>
    </source>
</evidence>
<evidence type="ECO:0000305" key="10"/>
<evidence type="ECO:0000312" key="11">
    <source>
        <dbReference type="MGI" id="MGI:1333870"/>
    </source>
</evidence>
<keyword id="KW-0012">Acyltransferase</keyword>
<keyword id="KW-0877">Alternative promoter usage</keyword>
<keyword id="KW-0025">Alternative splicing</keyword>
<keyword id="KW-0963">Cytoplasm</keyword>
<keyword id="KW-0539">Nucleus</keyword>
<keyword id="KW-1185">Reference proteome</keyword>
<keyword id="KW-0808">Transferase</keyword>
<keyword id="KW-0833">Ubl conjugation pathway</keyword>
<name>ATE1_MOUSE</name>
<reference key="1">
    <citation type="journal article" date="1999" name="Mol. Cell. Biol.">
        <title>Alternative splicing results in differential expression, activity, and localization of the two forms of arginyl-tRNA-protein transferase, a component of the N-end rule pathway.</title>
        <authorList>
            <person name="Kwon Y.T."/>
            <person name="Kashina A.S."/>
            <person name="Varshavsky A."/>
        </authorList>
    </citation>
    <scope>NUCLEOTIDE SEQUENCE [MRNA] (ISOFORMS ATE1-1 AND ATE1-2)</scope>
    <scope>FUNCTION</scope>
    <scope>SUBUNIT</scope>
    <scope>SUBCELLULAR LOCATION</scope>
    <scope>TISSUE SPECIFICITY</scope>
    <source>
        <tissue>Erythroleukemia</tissue>
    </source>
</reference>
<reference key="2">
    <citation type="journal article" date="2005" name="Proc. Natl. Acad. Sci. U.S.A.">
        <title>Identification of mammalian arginyltransferases that modify a specific subset of protein substrates.</title>
        <authorList>
            <person name="Rai R."/>
            <person name="Kashina A."/>
        </authorList>
    </citation>
    <scope>NUCLEOTIDE SEQUENCE (ISOFORMS ATE1-3 AND ATE1-4)</scope>
    <scope>FUNCTION</scope>
    <scope>CATALYTIC ACTIVITY</scope>
    <scope>SUBCELLULAR LOCATION</scope>
</reference>
<reference key="3">
    <citation type="journal article" date="2005" name="Science">
        <title>The transcriptional landscape of the mammalian genome.</title>
        <authorList>
            <person name="Carninci P."/>
            <person name="Kasukawa T."/>
            <person name="Katayama S."/>
            <person name="Gough J."/>
            <person name="Frith M.C."/>
            <person name="Maeda N."/>
            <person name="Oyama R."/>
            <person name="Ravasi T."/>
            <person name="Lenhard B."/>
            <person name="Wells C."/>
            <person name="Kodzius R."/>
            <person name="Shimokawa K."/>
            <person name="Bajic V.B."/>
            <person name="Brenner S.E."/>
            <person name="Batalov S."/>
            <person name="Forrest A.R."/>
            <person name="Zavolan M."/>
            <person name="Davis M.J."/>
            <person name="Wilming L.G."/>
            <person name="Aidinis V."/>
            <person name="Allen J.E."/>
            <person name="Ambesi-Impiombato A."/>
            <person name="Apweiler R."/>
            <person name="Aturaliya R.N."/>
            <person name="Bailey T.L."/>
            <person name="Bansal M."/>
            <person name="Baxter L."/>
            <person name="Beisel K.W."/>
            <person name="Bersano T."/>
            <person name="Bono H."/>
            <person name="Chalk A.M."/>
            <person name="Chiu K.P."/>
            <person name="Choudhary V."/>
            <person name="Christoffels A."/>
            <person name="Clutterbuck D.R."/>
            <person name="Crowe M.L."/>
            <person name="Dalla E."/>
            <person name="Dalrymple B.P."/>
            <person name="de Bono B."/>
            <person name="Della Gatta G."/>
            <person name="di Bernardo D."/>
            <person name="Down T."/>
            <person name="Engstrom P."/>
            <person name="Fagiolini M."/>
            <person name="Faulkner G."/>
            <person name="Fletcher C.F."/>
            <person name="Fukushima T."/>
            <person name="Furuno M."/>
            <person name="Futaki S."/>
            <person name="Gariboldi M."/>
            <person name="Georgii-Hemming P."/>
            <person name="Gingeras T.R."/>
            <person name="Gojobori T."/>
            <person name="Green R.E."/>
            <person name="Gustincich S."/>
            <person name="Harbers M."/>
            <person name="Hayashi Y."/>
            <person name="Hensch T.K."/>
            <person name="Hirokawa N."/>
            <person name="Hill D."/>
            <person name="Huminiecki L."/>
            <person name="Iacono M."/>
            <person name="Ikeo K."/>
            <person name="Iwama A."/>
            <person name="Ishikawa T."/>
            <person name="Jakt M."/>
            <person name="Kanapin A."/>
            <person name="Katoh M."/>
            <person name="Kawasawa Y."/>
            <person name="Kelso J."/>
            <person name="Kitamura H."/>
            <person name="Kitano H."/>
            <person name="Kollias G."/>
            <person name="Krishnan S.P."/>
            <person name="Kruger A."/>
            <person name="Kummerfeld S.K."/>
            <person name="Kurochkin I.V."/>
            <person name="Lareau L.F."/>
            <person name="Lazarevic D."/>
            <person name="Lipovich L."/>
            <person name="Liu J."/>
            <person name="Liuni S."/>
            <person name="McWilliam S."/>
            <person name="Madan Babu M."/>
            <person name="Madera M."/>
            <person name="Marchionni L."/>
            <person name="Matsuda H."/>
            <person name="Matsuzawa S."/>
            <person name="Miki H."/>
            <person name="Mignone F."/>
            <person name="Miyake S."/>
            <person name="Morris K."/>
            <person name="Mottagui-Tabar S."/>
            <person name="Mulder N."/>
            <person name="Nakano N."/>
            <person name="Nakauchi H."/>
            <person name="Ng P."/>
            <person name="Nilsson R."/>
            <person name="Nishiguchi S."/>
            <person name="Nishikawa S."/>
            <person name="Nori F."/>
            <person name="Ohara O."/>
            <person name="Okazaki Y."/>
            <person name="Orlando V."/>
            <person name="Pang K.C."/>
            <person name="Pavan W.J."/>
            <person name="Pavesi G."/>
            <person name="Pesole G."/>
            <person name="Petrovsky N."/>
            <person name="Piazza S."/>
            <person name="Reed J."/>
            <person name="Reid J.F."/>
            <person name="Ring B.Z."/>
            <person name="Ringwald M."/>
            <person name="Rost B."/>
            <person name="Ruan Y."/>
            <person name="Salzberg S.L."/>
            <person name="Sandelin A."/>
            <person name="Schneider C."/>
            <person name="Schoenbach C."/>
            <person name="Sekiguchi K."/>
            <person name="Semple C.A."/>
            <person name="Seno S."/>
            <person name="Sessa L."/>
            <person name="Sheng Y."/>
            <person name="Shibata Y."/>
            <person name="Shimada H."/>
            <person name="Shimada K."/>
            <person name="Silva D."/>
            <person name="Sinclair B."/>
            <person name="Sperling S."/>
            <person name="Stupka E."/>
            <person name="Sugiura K."/>
            <person name="Sultana R."/>
            <person name="Takenaka Y."/>
            <person name="Taki K."/>
            <person name="Tammoja K."/>
            <person name="Tan S.L."/>
            <person name="Tang S."/>
            <person name="Taylor M.S."/>
            <person name="Tegner J."/>
            <person name="Teichmann S.A."/>
            <person name="Ueda H.R."/>
            <person name="van Nimwegen E."/>
            <person name="Verardo R."/>
            <person name="Wei C.L."/>
            <person name="Yagi K."/>
            <person name="Yamanishi H."/>
            <person name="Zabarovsky E."/>
            <person name="Zhu S."/>
            <person name="Zimmer A."/>
            <person name="Hide W."/>
            <person name="Bult C."/>
            <person name="Grimmond S.M."/>
            <person name="Teasdale R.D."/>
            <person name="Liu E.T."/>
            <person name="Brusic V."/>
            <person name="Quackenbush J."/>
            <person name="Wahlestedt C."/>
            <person name="Mattick J.S."/>
            <person name="Hume D.A."/>
            <person name="Kai C."/>
            <person name="Sasaki D."/>
            <person name="Tomaru Y."/>
            <person name="Fukuda S."/>
            <person name="Kanamori-Katayama M."/>
            <person name="Suzuki M."/>
            <person name="Aoki J."/>
            <person name="Arakawa T."/>
            <person name="Iida J."/>
            <person name="Imamura K."/>
            <person name="Itoh M."/>
            <person name="Kato T."/>
            <person name="Kawaji H."/>
            <person name="Kawagashira N."/>
            <person name="Kawashima T."/>
            <person name="Kojima M."/>
            <person name="Kondo S."/>
            <person name="Konno H."/>
            <person name="Nakano K."/>
            <person name="Ninomiya N."/>
            <person name="Nishio T."/>
            <person name="Okada M."/>
            <person name="Plessy C."/>
            <person name="Shibata K."/>
            <person name="Shiraki T."/>
            <person name="Suzuki S."/>
            <person name="Tagami M."/>
            <person name="Waki K."/>
            <person name="Watahiki A."/>
            <person name="Okamura-Oho Y."/>
            <person name="Suzuki H."/>
            <person name="Kawai J."/>
            <person name="Hayashizaki Y."/>
        </authorList>
    </citation>
    <scope>NUCLEOTIDE SEQUENCE [LARGE SCALE MRNA] (ISOFORM ATE1-1)</scope>
    <source>
        <strain>C57BL/6J</strain>
        <tissue>Placenta</tissue>
    </source>
</reference>
<reference key="4">
    <citation type="journal article" date="2004" name="Genome Res.">
        <title>The status, quality, and expansion of the NIH full-length cDNA project: the Mammalian Gene Collection (MGC).</title>
        <authorList>
            <consortium name="The MGC Project Team"/>
        </authorList>
    </citation>
    <scope>NUCLEOTIDE SEQUENCE [LARGE SCALE MRNA] (ISOFORM ATE1-1)</scope>
    <source>
        <tissue>Eye</tissue>
    </source>
</reference>
<reference key="5">
    <citation type="journal article" date="2010" name="Cell">
        <title>A tissue-specific atlas of mouse protein phosphorylation and expression.</title>
        <authorList>
            <person name="Huttlin E.L."/>
            <person name="Jedrychowski M.P."/>
            <person name="Elias J.E."/>
            <person name="Goswami T."/>
            <person name="Rad R."/>
            <person name="Beausoleil S.A."/>
            <person name="Villen J."/>
            <person name="Haas W."/>
            <person name="Sowa M.E."/>
            <person name="Gygi S.P."/>
        </authorList>
    </citation>
    <scope>IDENTIFICATION BY MASS SPECTROMETRY [LARGE SCALE ANALYSIS]</scope>
    <source>
        <tissue>Brain</tissue>
        <tissue>Spleen</tissue>
        <tissue>Testis</tissue>
    </source>
</reference>
<reference key="6">
    <citation type="journal article" date="2014" name="Proc. Natl. Acad. Sci. U.S.A.">
        <title>Liat1, an arginyltransferase-binding protein whose evolution among primates involved changes in the numbers of its 10-residue repeats.</title>
        <authorList>
            <person name="Brower C.S."/>
            <person name="Rosen C.E."/>
            <person name="Jones R.H."/>
            <person name="Wadas B.C."/>
            <person name="Piatkov K.I."/>
            <person name="Varshavsky A."/>
        </authorList>
    </citation>
    <scope>INTERACTION WITH LIAT1</scope>
    <scope>ALTERNATIVE SPLICING</scope>
    <scope>FUNCTION</scope>
    <scope>CATALYTIC ACTIVITY</scope>
</reference>
<reference key="7">
    <citation type="journal article" date="2021" name="Proc. Natl. Acad. Sci. U.S.A.">
        <title>The Ligand of Ate1 is intrinsically disordered and participates in nucleolar phase separation regulated by Jumonji Domain Containing 6.</title>
        <authorList>
            <person name="Arva A."/>
            <person name="Kasu Y.A.T."/>
            <person name="Duncan J."/>
            <person name="Alkhatatbeh M.A."/>
            <person name="Brower C.S."/>
        </authorList>
    </citation>
    <scope>SUBCELLULAR LOCATION</scope>
    <scope>INTERACTION WITH LIAT1</scope>
</reference>
<reference key="8">
    <citation type="journal article" date="2021" name="Proc. Natl. Acad. Sci. U.S.A.">
        <title>The N-terminal cysteine is a dual sensor of oxygen and oxidative stress.</title>
        <authorList>
            <person name="Heo A.J."/>
            <person name="Kim S.B."/>
            <person name="Ji C.H."/>
            <person name="Han D."/>
            <person name="Lee S.J."/>
            <person name="Lee S.H."/>
            <person name="Lee M.J."/>
            <person name="Lee J.S."/>
            <person name="Ciechanover A."/>
            <person name="Kim B.Y."/>
            <person name="Kwon Y.T."/>
        </authorList>
    </citation>
    <scope>FUNCTION</scope>
</reference>
<accession>Q9Z2A5</accession>
<accession>Q4FCQ6</accession>
<accession>Q4FCQ7</accession>
<accession>Q8CFP7</accession>
<accession>Q9Z2A4</accession>
<sequence>MASWSAPSPSLVEYFEGQTSFQCGYCKNKLGSRSYGMWAHSMTVQDYQDLIDRGWRRSGKYVYKPVMDQTCCPQYTIRCHPLQFQPSKSHKKVLKKMLKFLAKGEISKGNCEDEPMDSTVEDAVDGDFALINKLDIKCDLKTLSDLKGSIESEEKEKEKSIKKEGSKEFIHPQSIEEKLGSGEPSHPIKVHIGPKPGKGADLSKPPCRKAREMRKERQRLKRMQQASAAASEAQGQPVCLLPKAKSNQPKSLEDLIFQSLPENASHKLEVRVVRSSPPSPQFRATFQESYQVYKRYQMVVHKDPPDKPTVSQFTRFLCSSPLEAEHPADGPECGYGSFHQQYWLDGKIIAVGVLDILPYCVSSVYLYYDPDYSFLSLGVYSALREIAFTRQLHEKTSQLSYYYMGFYIHSCPKMRYKGQYRPSDLLCPETYVWVPIEQCLPSLDNSKYCRFNQDPEAEDEGRSKELDRLRVFHRRSAMPYGVYKNHQEDPSEEAGVLEYANLVGQKCSERMLLFRH</sequence>
<feature type="chain" id="PRO_0000195089" description="Arginyl-tRNA--protein transferase 1">
    <location>
        <begin position="1"/>
        <end position="516"/>
    </location>
</feature>
<feature type="region of interest" description="Disordered" evidence="1">
    <location>
        <begin position="150"/>
        <end position="206"/>
    </location>
</feature>
<feature type="compositionally biased region" description="Basic and acidic residues" evidence="1">
    <location>
        <begin position="150"/>
        <end position="180"/>
    </location>
</feature>
<feature type="splice variant" id="VSP_061924" description="In isoform ATE1-3 and isoform ATE1-4." evidence="8">
    <original>MASWSAPSPSLVEYFEGQTSFQCGYCKNKLGSRSY</original>
    <variation>MASVVEYKGLKAGYYCGYCESREGKTSC</variation>
    <location>
        <begin position="1"/>
        <end position="35"/>
    </location>
</feature>
<feature type="splice variant" id="VSP_000337" description="In isoform ATE1-2 and isoform ATE1-4." evidence="7 8 9">
    <original>VVRSSPPSPQFRATFQESYQVYKRYQMVVHKDPPDKPTVSQ</original>
    <variation>LVPASFEDPEFNSSFNQSFSLYTKYQVAIHQEAPEICEKSE</variation>
    <location>
        <begin position="272"/>
        <end position="312"/>
    </location>
</feature>
<feature type="sequence conflict" description="In Ref. 1; AAD12364/AAD12365 and 2; AAZ03497." evidence="10" ref="1 2">
    <original>S</original>
    <variation>F</variation>
    <location>
        <position position="362"/>
    </location>
</feature>
<proteinExistence type="evidence at protein level"/>
<organism>
    <name type="scientific">Mus musculus</name>
    <name type="common">Mouse</name>
    <dbReference type="NCBI Taxonomy" id="10090"/>
    <lineage>
        <taxon>Eukaryota</taxon>
        <taxon>Metazoa</taxon>
        <taxon>Chordata</taxon>
        <taxon>Craniata</taxon>
        <taxon>Vertebrata</taxon>
        <taxon>Euteleostomi</taxon>
        <taxon>Mammalia</taxon>
        <taxon>Eutheria</taxon>
        <taxon>Euarchontoglires</taxon>
        <taxon>Glires</taxon>
        <taxon>Rodentia</taxon>
        <taxon>Myomorpha</taxon>
        <taxon>Muroidea</taxon>
        <taxon>Muridae</taxon>
        <taxon>Murinae</taxon>
        <taxon>Mus</taxon>
        <taxon>Mus</taxon>
    </lineage>
</organism>